<gene>
    <name type="primary">RPL11</name>
    <name type="ordered locus">At1g32990</name>
    <name type="ORF">F9L11.15</name>
</gene>
<comment type="function">
    <text evidence="1">Forms part of the ribosomal stalk which helps the ribosome interact with GTP-bound translation factors.</text>
</comment>
<comment type="subunit">
    <text evidence="1">Part of the ribosomal stalk of the 50S ribosomal subunit. Interacts with L10 and the large rRNA to form the base of the stalk. L10 forms an elongated spine to which L12 dimers bind in a sequential fashion forming a multimeric L10(L12)X complex (By similarity).</text>
</comment>
<comment type="subcellular location">
    <subcellularLocation>
        <location evidence="5">Plastid</location>
        <location evidence="5">Chloroplast</location>
    </subcellularLocation>
</comment>
<comment type="similarity">
    <text evidence="5">Belongs to the universal ribosomal protein uL11 family.</text>
</comment>
<dbReference type="EMBL" id="AC006424">
    <property type="protein sequence ID" value="AAF31280.1"/>
    <property type="molecule type" value="Genomic_DNA"/>
</dbReference>
<dbReference type="EMBL" id="CP002684">
    <property type="protein sequence ID" value="AEE31548.1"/>
    <property type="molecule type" value="Genomic_DNA"/>
</dbReference>
<dbReference type="EMBL" id="AF325023">
    <property type="protein sequence ID" value="AAG40375.1"/>
    <property type="molecule type" value="mRNA"/>
</dbReference>
<dbReference type="EMBL" id="AF412105">
    <property type="protein sequence ID" value="AAL06558.1"/>
    <property type="molecule type" value="mRNA"/>
</dbReference>
<dbReference type="EMBL" id="AF370254">
    <property type="protein sequence ID" value="AAK44069.1"/>
    <property type="molecule type" value="mRNA"/>
</dbReference>
<dbReference type="EMBL" id="AY063070">
    <property type="protein sequence ID" value="AAL34244.1"/>
    <property type="molecule type" value="mRNA"/>
</dbReference>
<dbReference type="EMBL" id="AY085664">
    <property type="protein sequence ID" value="AAM62884.1"/>
    <property type="molecule type" value="mRNA"/>
</dbReference>
<dbReference type="PIR" id="E86454">
    <property type="entry name" value="E86454"/>
</dbReference>
<dbReference type="SMR" id="Q9MAP3"/>
<dbReference type="BioGRID" id="25428">
    <property type="interactions" value="6"/>
</dbReference>
<dbReference type="FunCoup" id="Q9MAP3">
    <property type="interactions" value="1197"/>
</dbReference>
<dbReference type="STRING" id="3702.Q9MAP3"/>
<dbReference type="iPTMnet" id="Q9MAP3"/>
<dbReference type="PaxDb" id="3702-AT1G32990.1"/>
<dbReference type="ProteomicsDB" id="236954"/>
<dbReference type="EnsemblPlants" id="AT1G32990.1">
    <property type="protein sequence ID" value="AT1G32990.1"/>
    <property type="gene ID" value="AT1G32990"/>
</dbReference>
<dbReference type="Gramene" id="AT1G32990.1">
    <property type="protein sequence ID" value="AT1G32990.1"/>
    <property type="gene ID" value="AT1G32990"/>
</dbReference>
<dbReference type="KEGG" id="ath:AT1G32990"/>
<dbReference type="Araport" id="AT1G32990"/>
<dbReference type="TAIR" id="AT1G32990">
    <property type="gene designation" value="PRPL11"/>
</dbReference>
<dbReference type="eggNOG" id="KOG3257">
    <property type="taxonomic scope" value="Eukaryota"/>
</dbReference>
<dbReference type="HOGENOM" id="CLU_074237_0_1_1"/>
<dbReference type="InParanoid" id="Q9MAP3"/>
<dbReference type="OMA" id="CKNIDSA"/>
<dbReference type="OrthoDB" id="1091498at2759"/>
<dbReference type="PhylomeDB" id="Q9MAP3"/>
<dbReference type="CD-CODE" id="4299E36E">
    <property type="entry name" value="Nucleolus"/>
</dbReference>
<dbReference type="PRO" id="PR:Q9MAP3"/>
<dbReference type="Proteomes" id="UP000006548">
    <property type="component" value="Chromosome 1"/>
</dbReference>
<dbReference type="ExpressionAtlas" id="Q9MAP3">
    <property type="expression patterns" value="baseline and differential"/>
</dbReference>
<dbReference type="GO" id="GO:0009507">
    <property type="term" value="C:chloroplast"/>
    <property type="evidence" value="ECO:0007005"/>
    <property type="project" value="TAIR"/>
</dbReference>
<dbReference type="GO" id="GO:0009941">
    <property type="term" value="C:chloroplast envelope"/>
    <property type="evidence" value="ECO:0007005"/>
    <property type="project" value="TAIR"/>
</dbReference>
<dbReference type="GO" id="GO:0009570">
    <property type="term" value="C:chloroplast stroma"/>
    <property type="evidence" value="ECO:0007005"/>
    <property type="project" value="TAIR"/>
</dbReference>
<dbReference type="GO" id="GO:0022626">
    <property type="term" value="C:cytosolic ribosome"/>
    <property type="evidence" value="ECO:0007005"/>
    <property type="project" value="TAIR"/>
</dbReference>
<dbReference type="GO" id="GO:0005634">
    <property type="term" value="C:nucleus"/>
    <property type="evidence" value="ECO:0007005"/>
    <property type="project" value="TAIR"/>
</dbReference>
<dbReference type="GO" id="GO:1990904">
    <property type="term" value="C:ribonucleoprotein complex"/>
    <property type="evidence" value="ECO:0007669"/>
    <property type="project" value="UniProtKB-KW"/>
</dbReference>
<dbReference type="GO" id="GO:0019843">
    <property type="term" value="F:rRNA binding"/>
    <property type="evidence" value="ECO:0007669"/>
    <property type="project" value="UniProtKB-KW"/>
</dbReference>
<dbReference type="GO" id="GO:0003735">
    <property type="term" value="F:structural constituent of ribosome"/>
    <property type="evidence" value="ECO:0007669"/>
    <property type="project" value="InterPro"/>
</dbReference>
<dbReference type="GO" id="GO:0006412">
    <property type="term" value="P:translation"/>
    <property type="evidence" value="ECO:0007669"/>
    <property type="project" value="InterPro"/>
</dbReference>
<dbReference type="CDD" id="cd00349">
    <property type="entry name" value="Ribosomal_L11"/>
    <property type="match status" value="1"/>
</dbReference>
<dbReference type="FunFam" id="1.10.10.250:FF:000001">
    <property type="entry name" value="50S ribosomal protein L11"/>
    <property type="match status" value="1"/>
</dbReference>
<dbReference type="FunFam" id="3.30.1550.10:FF:000001">
    <property type="entry name" value="50S ribosomal protein L11"/>
    <property type="match status" value="1"/>
</dbReference>
<dbReference type="Gene3D" id="1.10.10.250">
    <property type="entry name" value="Ribosomal protein L11, C-terminal domain"/>
    <property type="match status" value="1"/>
</dbReference>
<dbReference type="Gene3D" id="3.30.1550.10">
    <property type="entry name" value="Ribosomal protein L11/L12, N-terminal domain"/>
    <property type="match status" value="1"/>
</dbReference>
<dbReference type="HAMAP" id="MF_00736">
    <property type="entry name" value="Ribosomal_uL11"/>
    <property type="match status" value="1"/>
</dbReference>
<dbReference type="InterPro" id="IPR000911">
    <property type="entry name" value="Ribosomal_uL11"/>
</dbReference>
<dbReference type="InterPro" id="IPR006519">
    <property type="entry name" value="Ribosomal_uL11_bac-typ"/>
</dbReference>
<dbReference type="InterPro" id="IPR020783">
    <property type="entry name" value="Ribosomal_uL11_C"/>
</dbReference>
<dbReference type="InterPro" id="IPR036769">
    <property type="entry name" value="Ribosomal_uL11_C_sf"/>
</dbReference>
<dbReference type="InterPro" id="IPR020785">
    <property type="entry name" value="Ribosomal_uL11_CS"/>
</dbReference>
<dbReference type="InterPro" id="IPR020784">
    <property type="entry name" value="Ribosomal_uL11_N"/>
</dbReference>
<dbReference type="InterPro" id="IPR036796">
    <property type="entry name" value="Ribosomal_uL11_N_sf"/>
</dbReference>
<dbReference type="NCBIfam" id="TIGR01632">
    <property type="entry name" value="L11_bact"/>
    <property type="match status" value="1"/>
</dbReference>
<dbReference type="PANTHER" id="PTHR11661">
    <property type="entry name" value="60S RIBOSOMAL PROTEIN L12"/>
    <property type="match status" value="1"/>
</dbReference>
<dbReference type="PANTHER" id="PTHR11661:SF1">
    <property type="entry name" value="LARGE RIBOSOMAL SUBUNIT PROTEIN UL11M"/>
    <property type="match status" value="1"/>
</dbReference>
<dbReference type="Pfam" id="PF00298">
    <property type="entry name" value="Ribosomal_L11"/>
    <property type="match status" value="1"/>
</dbReference>
<dbReference type="Pfam" id="PF03946">
    <property type="entry name" value="Ribosomal_L11_N"/>
    <property type="match status" value="1"/>
</dbReference>
<dbReference type="SMART" id="SM00649">
    <property type="entry name" value="RL11"/>
    <property type="match status" value="1"/>
</dbReference>
<dbReference type="SUPFAM" id="SSF54747">
    <property type="entry name" value="Ribosomal L11/L12e N-terminal domain"/>
    <property type="match status" value="1"/>
</dbReference>
<dbReference type="SUPFAM" id="SSF46906">
    <property type="entry name" value="Ribosomal protein L11, C-terminal domain"/>
    <property type="match status" value="1"/>
</dbReference>
<dbReference type="PROSITE" id="PS00359">
    <property type="entry name" value="RIBOSOMAL_L11"/>
    <property type="match status" value="1"/>
</dbReference>
<name>RK11_ARATH</name>
<sequence>MASSSLSTLCSSTSSSLHPNSKLSHSLSAKLSSKANVSVQFLGKKQSPLLSSTPRFLTVIAMAPPKPGGKAKKVVGVIKLALEAGKATPAPPVGPALGSKGVNIMAFCKDYNARTADKAGYIIPVEITVFDDKSFTFILKTPPASVLLLKAAGVEKGSKDPQQDKVGVITIDQLRTIAAEKLPDLNCTTIESAMRIIAGTAANMGIDIDPPILEPKKKAVLL</sequence>
<accession>Q9MAP3</accession>
<proteinExistence type="evidence at transcript level"/>
<organism>
    <name type="scientific">Arabidopsis thaliana</name>
    <name type="common">Mouse-ear cress</name>
    <dbReference type="NCBI Taxonomy" id="3702"/>
    <lineage>
        <taxon>Eukaryota</taxon>
        <taxon>Viridiplantae</taxon>
        <taxon>Streptophyta</taxon>
        <taxon>Embryophyta</taxon>
        <taxon>Tracheophyta</taxon>
        <taxon>Spermatophyta</taxon>
        <taxon>Magnoliopsida</taxon>
        <taxon>eudicotyledons</taxon>
        <taxon>Gunneridae</taxon>
        <taxon>Pentapetalae</taxon>
        <taxon>rosids</taxon>
        <taxon>malvids</taxon>
        <taxon>Brassicales</taxon>
        <taxon>Brassicaceae</taxon>
        <taxon>Camelineae</taxon>
        <taxon>Arabidopsis</taxon>
    </lineage>
</organism>
<evidence type="ECO:0000250" key="1"/>
<evidence type="ECO:0000255" key="2"/>
<evidence type="ECO:0000256" key="3">
    <source>
        <dbReference type="SAM" id="MobiDB-lite"/>
    </source>
</evidence>
<evidence type="ECO:0000303" key="4">
    <source>
    </source>
</evidence>
<evidence type="ECO:0000305" key="5"/>
<reference key="1">
    <citation type="journal article" date="2000" name="Nature">
        <title>Sequence and analysis of chromosome 1 of the plant Arabidopsis thaliana.</title>
        <authorList>
            <person name="Theologis A."/>
            <person name="Ecker J.R."/>
            <person name="Palm C.J."/>
            <person name="Federspiel N.A."/>
            <person name="Kaul S."/>
            <person name="White O."/>
            <person name="Alonso J."/>
            <person name="Altafi H."/>
            <person name="Araujo R."/>
            <person name="Bowman C.L."/>
            <person name="Brooks S.Y."/>
            <person name="Buehler E."/>
            <person name="Chan A."/>
            <person name="Chao Q."/>
            <person name="Chen H."/>
            <person name="Cheuk R.F."/>
            <person name="Chin C.W."/>
            <person name="Chung M.K."/>
            <person name="Conn L."/>
            <person name="Conway A.B."/>
            <person name="Conway A.R."/>
            <person name="Creasy T.H."/>
            <person name="Dewar K."/>
            <person name="Dunn P."/>
            <person name="Etgu P."/>
            <person name="Feldblyum T.V."/>
            <person name="Feng J.-D."/>
            <person name="Fong B."/>
            <person name="Fujii C.Y."/>
            <person name="Gill J.E."/>
            <person name="Goldsmith A.D."/>
            <person name="Haas B."/>
            <person name="Hansen N.F."/>
            <person name="Hughes B."/>
            <person name="Huizar L."/>
            <person name="Hunter J.L."/>
            <person name="Jenkins J."/>
            <person name="Johnson-Hopson C."/>
            <person name="Khan S."/>
            <person name="Khaykin E."/>
            <person name="Kim C.J."/>
            <person name="Koo H.L."/>
            <person name="Kremenetskaia I."/>
            <person name="Kurtz D.B."/>
            <person name="Kwan A."/>
            <person name="Lam B."/>
            <person name="Langin-Hooper S."/>
            <person name="Lee A."/>
            <person name="Lee J.M."/>
            <person name="Lenz C.A."/>
            <person name="Li J.H."/>
            <person name="Li Y.-P."/>
            <person name="Lin X."/>
            <person name="Liu S.X."/>
            <person name="Liu Z.A."/>
            <person name="Luros J.S."/>
            <person name="Maiti R."/>
            <person name="Marziali A."/>
            <person name="Militscher J."/>
            <person name="Miranda M."/>
            <person name="Nguyen M."/>
            <person name="Nierman W.C."/>
            <person name="Osborne B.I."/>
            <person name="Pai G."/>
            <person name="Peterson J."/>
            <person name="Pham P.K."/>
            <person name="Rizzo M."/>
            <person name="Rooney T."/>
            <person name="Rowley D."/>
            <person name="Sakano H."/>
            <person name="Salzberg S.L."/>
            <person name="Schwartz J.R."/>
            <person name="Shinn P."/>
            <person name="Southwick A.M."/>
            <person name="Sun H."/>
            <person name="Tallon L.J."/>
            <person name="Tambunga G."/>
            <person name="Toriumi M.J."/>
            <person name="Town C.D."/>
            <person name="Utterback T."/>
            <person name="Van Aken S."/>
            <person name="Vaysberg M."/>
            <person name="Vysotskaia V.S."/>
            <person name="Walker M."/>
            <person name="Wu D."/>
            <person name="Yu G."/>
            <person name="Fraser C.M."/>
            <person name="Venter J.C."/>
            <person name="Davis R.W."/>
        </authorList>
    </citation>
    <scope>NUCLEOTIDE SEQUENCE [LARGE SCALE GENOMIC DNA]</scope>
    <source>
        <strain>cv. Columbia</strain>
    </source>
</reference>
<reference key="2">
    <citation type="journal article" date="2017" name="Plant J.">
        <title>Araport11: a complete reannotation of the Arabidopsis thaliana reference genome.</title>
        <authorList>
            <person name="Cheng C.Y."/>
            <person name="Krishnakumar V."/>
            <person name="Chan A.P."/>
            <person name="Thibaud-Nissen F."/>
            <person name="Schobel S."/>
            <person name="Town C.D."/>
        </authorList>
    </citation>
    <scope>GENOME REANNOTATION</scope>
    <source>
        <strain>cv. Columbia</strain>
    </source>
</reference>
<reference key="3">
    <citation type="journal article" date="2003" name="Science">
        <title>Empirical analysis of transcriptional activity in the Arabidopsis genome.</title>
        <authorList>
            <person name="Yamada K."/>
            <person name="Lim J."/>
            <person name="Dale J.M."/>
            <person name="Chen H."/>
            <person name="Shinn P."/>
            <person name="Palm C.J."/>
            <person name="Southwick A.M."/>
            <person name="Wu H.C."/>
            <person name="Kim C.J."/>
            <person name="Nguyen M."/>
            <person name="Pham P.K."/>
            <person name="Cheuk R.F."/>
            <person name="Karlin-Newmann G."/>
            <person name="Liu S.X."/>
            <person name="Lam B."/>
            <person name="Sakano H."/>
            <person name="Wu T."/>
            <person name="Yu G."/>
            <person name="Miranda M."/>
            <person name="Quach H.L."/>
            <person name="Tripp M."/>
            <person name="Chang C.H."/>
            <person name="Lee J.M."/>
            <person name="Toriumi M.J."/>
            <person name="Chan M.M."/>
            <person name="Tang C.C."/>
            <person name="Onodera C.S."/>
            <person name="Deng J.M."/>
            <person name="Akiyama K."/>
            <person name="Ansari Y."/>
            <person name="Arakawa T."/>
            <person name="Banh J."/>
            <person name="Banno F."/>
            <person name="Bowser L."/>
            <person name="Brooks S.Y."/>
            <person name="Carninci P."/>
            <person name="Chao Q."/>
            <person name="Choy N."/>
            <person name="Enju A."/>
            <person name="Goldsmith A.D."/>
            <person name="Gurjal M."/>
            <person name="Hansen N.F."/>
            <person name="Hayashizaki Y."/>
            <person name="Johnson-Hopson C."/>
            <person name="Hsuan V.W."/>
            <person name="Iida K."/>
            <person name="Karnes M."/>
            <person name="Khan S."/>
            <person name="Koesema E."/>
            <person name="Ishida J."/>
            <person name="Jiang P.X."/>
            <person name="Jones T."/>
            <person name="Kawai J."/>
            <person name="Kamiya A."/>
            <person name="Meyers C."/>
            <person name="Nakajima M."/>
            <person name="Narusaka M."/>
            <person name="Seki M."/>
            <person name="Sakurai T."/>
            <person name="Satou M."/>
            <person name="Tamse R."/>
            <person name="Vaysberg M."/>
            <person name="Wallender E.K."/>
            <person name="Wong C."/>
            <person name="Yamamura Y."/>
            <person name="Yuan S."/>
            <person name="Shinozaki K."/>
            <person name="Davis R.W."/>
            <person name="Theologis A."/>
            <person name="Ecker J.R."/>
        </authorList>
    </citation>
    <scope>NUCLEOTIDE SEQUENCE [LARGE SCALE MRNA]</scope>
    <source>
        <strain>cv. Columbia</strain>
    </source>
</reference>
<reference key="4">
    <citation type="submission" date="2002-03" db="EMBL/GenBank/DDBJ databases">
        <title>Full-length cDNA from Arabidopsis thaliana.</title>
        <authorList>
            <person name="Brover V.V."/>
            <person name="Troukhan M.E."/>
            <person name="Alexandrov N.A."/>
            <person name="Lu Y.-P."/>
            <person name="Flavell R.B."/>
            <person name="Feldmann K.A."/>
        </authorList>
    </citation>
    <scope>NUCLEOTIDE SEQUENCE [LARGE SCALE MRNA]</scope>
</reference>
<reference key="5">
    <citation type="journal article" date="2023" name="Plant Cell">
        <title>An updated nomenclature for plant ribosomal protein genes.</title>
        <authorList>
            <person name="Scarpin M.R."/>
            <person name="Busche M."/>
            <person name="Martinez R.E."/>
            <person name="Harper L.C."/>
            <person name="Reiser L."/>
            <person name="Szakonyi D."/>
            <person name="Merchante C."/>
            <person name="Lan T."/>
            <person name="Xiong W."/>
            <person name="Mo B."/>
            <person name="Tang G."/>
            <person name="Chen X."/>
            <person name="Bailey-Serres J."/>
            <person name="Browning K.S."/>
            <person name="Brunkard J.O."/>
        </authorList>
    </citation>
    <scope>NOMENCLATURE</scope>
</reference>
<feature type="transit peptide" description="Chloroplast" evidence="2">
    <location>
        <begin position="1"/>
        <end position="62"/>
    </location>
</feature>
<feature type="chain" id="PRO_0000030441" description="Large ribosomal subunit protein uL11c">
    <location>
        <begin position="63"/>
        <end position="222"/>
    </location>
</feature>
<feature type="region of interest" description="Disordered" evidence="3">
    <location>
        <begin position="1"/>
        <end position="20"/>
    </location>
</feature>
<keyword id="KW-0150">Chloroplast</keyword>
<keyword id="KW-0934">Plastid</keyword>
<keyword id="KW-1185">Reference proteome</keyword>
<keyword id="KW-0687">Ribonucleoprotein</keyword>
<keyword id="KW-0689">Ribosomal protein</keyword>
<keyword id="KW-0694">RNA-binding</keyword>
<keyword id="KW-0699">rRNA-binding</keyword>
<keyword id="KW-0809">Transit peptide</keyword>
<protein>
    <recommendedName>
        <fullName evidence="4">Large ribosomal subunit protein uL11c</fullName>
    </recommendedName>
    <alternativeName>
        <fullName>50S ribosomal protein L11, chloroplastic</fullName>
    </alternativeName>
    <alternativeName>
        <fullName>CL11</fullName>
    </alternativeName>
</protein>